<reference key="1">
    <citation type="journal article" date="1999" name="Biochem. Biophys. Res. Commun.">
        <title>Sequence and tissue distribution of a novel G-protein-coupled receptor expressed prominently in human placenta.</title>
        <authorList>
            <person name="Cikos S."/>
            <person name="Gregor P."/>
            <person name="Koppel J."/>
        </authorList>
    </citation>
    <scope>NUCLEOTIDE SEQUENCE [MRNA] (ISOFORM 1)</scope>
    <scope>TISSUE SPECIFICITY</scope>
    <source>
        <tissue>Fetus</tissue>
    </source>
</reference>
<reference key="2">
    <citation type="journal article" date="2000" name="J. Biol. Chem.">
        <title>Receptor for the pain modulatory neuropeptides FF and AF is an orphan G protein-coupled receptor.</title>
        <authorList>
            <person name="Elshourbagy N.A."/>
            <person name="Ames R.S."/>
            <person name="Fitzgerald L.R."/>
            <person name="Foley J.J."/>
            <person name="Chambers J.K."/>
            <person name="Szekeres P.G."/>
            <person name="Evans N.A."/>
            <person name="Schmidt D.B."/>
            <person name="Buckley P.T."/>
            <person name="Dytko G.M."/>
            <person name="Murdock P.R."/>
            <person name="Milligan G."/>
            <person name="Groarke D.A."/>
            <person name="Tan K.B."/>
            <person name="Shabon U."/>
            <person name="Nuthulaganti P."/>
            <person name="Wang D.Y."/>
            <person name="Wilson S."/>
            <person name="Bergsma D.J."/>
            <person name="Sarau H.M."/>
        </authorList>
    </citation>
    <scope>NUCLEOTIDE SEQUENCE [MRNA] (ISOFORM 2)</scope>
    <scope>CHARACTERIZATION</scope>
    <source>
        <tissue>Brain</tissue>
    </source>
</reference>
<reference key="3">
    <citation type="journal article" date="2000" name="J. Biol. Chem.">
        <title>Identification and characterization of two G protein-coupled receptors for neuropeptide FF.</title>
        <authorList>
            <person name="Bonini J.A."/>
            <person name="Jones K.A."/>
            <person name="Adham N."/>
            <person name="Forray C."/>
            <person name="Artymyshyn R."/>
            <person name="Durkin M.M."/>
            <person name="Smith K.E."/>
            <person name="Tamm J.A."/>
            <person name="Boteju L.W."/>
            <person name="Lakhlani P.P."/>
            <person name="Raddatz R."/>
            <person name="Yao W.-J."/>
            <person name="Ogozalek K.L."/>
            <person name="Boyle N."/>
            <person name="Kouranova E.V."/>
            <person name="Quan Y."/>
            <person name="Vaysse P.J."/>
            <person name="Wetzel J.M."/>
            <person name="Branchek T.A."/>
            <person name="Gerald C."/>
            <person name="Borowsky B."/>
        </authorList>
    </citation>
    <scope>NUCLEOTIDE SEQUENCE [MRNA] (ISOFORM 2)</scope>
    <scope>CHARACTERIZATION</scope>
    <scope>FUNCTION</scope>
    <scope>SUBCELLULAR LOCATION</scope>
    <source>
        <tissue>Spinal cord</tissue>
    </source>
</reference>
<reference key="4">
    <citation type="journal article" date="2000" name="Brain Res. Mol. Brain Res.">
        <title>Molecular cloning and characterisation of GPR74 a novel G-protein coupled receptor closest related to the Y-receptor family.</title>
        <authorList>
            <person name="Parker R.M.C."/>
            <person name="Copeland N.G."/>
            <person name="Eyre H.J."/>
            <person name="Liu M."/>
            <person name="Gilbert D.J."/>
            <person name="Crawford J."/>
            <person name="Couzens M."/>
            <person name="Sutherland G.R."/>
            <person name="Jenkins N.A."/>
            <person name="Herzog H."/>
        </authorList>
    </citation>
    <scope>NUCLEOTIDE SEQUENCE [MRNA] (ISOFORM 3)</scope>
</reference>
<reference key="5">
    <citation type="submission" date="2000-12" db="EMBL/GenBank/DDBJ databases">
        <title>Identification and characterization of two cognate receptors for mammalian FMRFamide-like neuropeptides.</title>
        <authorList>
            <person name="Liu Q."/>
            <person name="Guan X.-M."/>
            <person name="McDonald T.P."/>
            <person name="Jiang Q."/>
            <person name="Zeng Z."/>
            <person name="Marlene J."/>
            <person name="Williams D.L. Jr."/>
            <person name="Hong Y."/>
            <person name="Figueroa D."/>
            <person name="Clements M.K."/>
            <person name="Mallee J."/>
            <person name="Wang R."/>
            <person name="Evans J."/>
            <person name="Gould R."/>
            <person name="Austin C.P."/>
        </authorList>
    </citation>
    <scope>NUCLEOTIDE SEQUENCE [MRNA] (ISOFORM 2)</scope>
</reference>
<reference key="6">
    <citation type="submission" date="2001-05" db="EMBL/GenBank/DDBJ databases">
        <title>Cloning and characterization of the NPGP receptor and identification of a novel short mRNA isoform in human hypothalamus.</title>
        <authorList>
            <person name="Laemmle B.S."/>
            <person name="Schindler M."/>
            <person name="Beilmann M."/>
            <person name="Hamilton B.S."/>
            <person name="Doods H.N."/>
            <person name="Wieland H.A."/>
        </authorList>
    </citation>
    <scope>NUCLEOTIDE SEQUENCE [MRNA] (ISOFORM 4)</scope>
</reference>
<gene>
    <name evidence="12" type="primary">NPFFR2</name>
    <name type="synonym">GPR74</name>
    <name type="synonym">NPFF2</name>
    <name type="synonym">NPGPR</name>
</gene>
<comment type="function">
    <text evidence="5">Receptor for NPAF (A-18-F-amide) and NPFF (F-8-F-amide) neuropeptides, also known as morphine-modulating peptides. Can also be activated by a variety of naturally occurring or synthetic FMRF-amide like ligands. This receptor mediates its action by association with G proteins that activate a phosphatidylinositol-calcium second messenger system.</text>
</comment>
<comment type="interaction">
    <interactant intactId="EBI-18076879">
        <id>Q9Y5X5-3</id>
    </interactant>
    <interactant intactId="EBI-3918971">
        <id>Q9Y680</id>
        <label>FKBP7</label>
    </interactant>
    <organismsDiffer>false</organismsDiffer>
    <experiments>3</experiments>
</comment>
<comment type="interaction">
    <interactant intactId="EBI-18076879">
        <id>Q9Y5X5-3</id>
    </interactant>
    <interactant intactId="EBI-10173151">
        <id>A2RU14</id>
        <label>TMEM218</label>
    </interactant>
    <organismsDiffer>false</organismsDiffer>
    <experiments>3</experiments>
</comment>
<comment type="interaction">
    <interactant intactId="EBI-18076879">
        <id>Q9Y5X5-3</id>
    </interactant>
    <interactant intactId="EBI-11988865">
        <id>A5PKU2</id>
        <label>TUSC5</label>
    </interactant>
    <organismsDiffer>false</organismsDiffer>
    <experiments>3</experiments>
</comment>
<comment type="subcellular location">
    <subcellularLocation>
        <location evidence="5">Cell membrane</location>
        <topology evidence="1">Multi-pass membrane protein</topology>
    </subcellularLocation>
</comment>
<comment type="alternative products">
    <event type="alternative splicing"/>
    <isoform>
        <id>Q9Y5X5-1</id>
        <name>1</name>
        <name>long form</name>
        <sequence type="displayed"/>
    </isoform>
    <isoform>
        <id>Q9Y5X5-2</id>
        <name>2</name>
        <name>short form</name>
        <sequence type="described" ref="VSP_001907"/>
    </isoform>
    <isoform>
        <id>Q9Y5X5-3</id>
        <name>3</name>
        <sequence type="described" ref="VSP_001908 VSP_001909"/>
    </isoform>
    <isoform>
        <id>Q9Y5X5-4</id>
        <name>4</name>
        <sequence type="described" ref="VSP_001910 VSP_001911"/>
    </isoform>
    <text>Experimental confirmation may be lacking for some isoforms.</text>
</comment>
<comment type="tissue specificity">
    <text evidence="4">Isoform 1 is abundant in placenta. Relatively highly expressed in thymus, testis, and small intestine. Expressed at low levels in several tissues including spleen, prostate, brain, heart, ovary, colon, kidney, lung, liver and pancreas and not expressed in skeletal muscle and leukocytes. Isoform 2 expression is highest in placenta (but at relatively low level compared to isoform 1). Very low level of expression in numerous tissues including adipose tissue and many brain regions. Isoform 3 is expressed in brain and heart and, at lower levels, in kidney, liver, lung and pancreas.</text>
</comment>
<comment type="similarity">
    <text evidence="2">Belongs to the G-protein coupled receptor 1 family.</text>
</comment>
<comment type="sequence caution" evidence="11">
    <conflict type="frameshift">
        <sequence resource="EMBL-CDS" id="AAK58513"/>
    </conflict>
</comment>
<keyword id="KW-0025">Alternative splicing</keyword>
<keyword id="KW-1003">Cell membrane</keyword>
<keyword id="KW-1015">Disulfide bond</keyword>
<keyword id="KW-0297">G-protein coupled receptor</keyword>
<keyword id="KW-0325">Glycoprotein</keyword>
<keyword id="KW-0472">Membrane</keyword>
<keyword id="KW-1267">Proteomics identification</keyword>
<keyword id="KW-0675">Receptor</keyword>
<keyword id="KW-1185">Reference proteome</keyword>
<keyword id="KW-0807">Transducer</keyword>
<keyword id="KW-0812">Transmembrane</keyword>
<keyword id="KW-1133">Transmembrane helix</keyword>
<organism>
    <name type="scientific">Homo sapiens</name>
    <name type="common">Human</name>
    <dbReference type="NCBI Taxonomy" id="9606"/>
    <lineage>
        <taxon>Eukaryota</taxon>
        <taxon>Metazoa</taxon>
        <taxon>Chordata</taxon>
        <taxon>Craniata</taxon>
        <taxon>Vertebrata</taxon>
        <taxon>Euteleostomi</taxon>
        <taxon>Mammalia</taxon>
        <taxon>Eutheria</taxon>
        <taxon>Euarchontoglires</taxon>
        <taxon>Primates</taxon>
        <taxon>Haplorrhini</taxon>
        <taxon>Catarrhini</taxon>
        <taxon>Hominidae</taxon>
        <taxon>Homo</taxon>
    </lineage>
</organism>
<dbReference type="EMBL" id="AF119815">
    <property type="protein sequence ID" value="AAD22047.1"/>
    <property type="molecule type" value="mRNA"/>
</dbReference>
<dbReference type="EMBL" id="AF257210">
    <property type="protein sequence ID" value="AAF87078.1"/>
    <property type="molecule type" value="mRNA"/>
</dbReference>
<dbReference type="EMBL" id="AF268899">
    <property type="protein sequence ID" value="AAG41398.1"/>
    <property type="molecule type" value="mRNA"/>
</dbReference>
<dbReference type="EMBL" id="AF236083">
    <property type="protein sequence ID" value="AAK58513.1"/>
    <property type="status" value="ALT_FRAME"/>
    <property type="molecule type" value="mRNA"/>
</dbReference>
<dbReference type="EMBL" id="AF330053">
    <property type="protein sequence ID" value="AAK94197.1"/>
    <property type="molecule type" value="mRNA"/>
</dbReference>
<dbReference type="EMBL" id="AJ311393">
    <property type="protein sequence ID" value="CAC85427.1"/>
    <property type="molecule type" value="mRNA"/>
</dbReference>
<dbReference type="CCDS" id="CCDS3552.1">
    <molecule id="Q9Y5X5-2"/>
</dbReference>
<dbReference type="CCDS" id="CCDS47072.1">
    <molecule id="Q9Y5X5-3"/>
</dbReference>
<dbReference type="RefSeq" id="NP_001138228.1">
    <molecule id="Q9Y5X5-3"/>
    <property type="nucleotide sequence ID" value="NM_001144756.2"/>
</dbReference>
<dbReference type="RefSeq" id="NP_004876.3">
    <molecule id="Q9Y5X5-2"/>
    <property type="nucleotide sequence ID" value="NM_004885.3"/>
</dbReference>
<dbReference type="RefSeq" id="NP_444264.1">
    <molecule id="Q9Y5X5-2"/>
    <property type="nucleotide sequence ID" value="NM_053036.3"/>
</dbReference>
<dbReference type="SMR" id="Q9Y5X5"/>
<dbReference type="BioGRID" id="116093">
    <property type="interactions" value="4"/>
</dbReference>
<dbReference type="CORUM" id="Q9Y5X5"/>
<dbReference type="FunCoup" id="Q9Y5X5">
    <property type="interactions" value="573"/>
</dbReference>
<dbReference type="IntAct" id="Q9Y5X5">
    <property type="interactions" value="4"/>
</dbReference>
<dbReference type="STRING" id="9606.ENSP00000307822"/>
<dbReference type="BindingDB" id="Q9Y5X5"/>
<dbReference type="ChEMBL" id="CHEMBL5952"/>
<dbReference type="GuidetoPHARMACOLOGY" id="301"/>
<dbReference type="GlyCosmos" id="Q9Y5X5">
    <property type="glycosylation" value="4 sites, No reported glycans"/>
</dbReference>
<dbReference type="GlyGen" id="Q9Y5X5">
    <property type="glycosylation" value="4 sites"/>
</dbReference>
<dbReference type="iPTMnet" id="Q9Y5X5"/>
<dbReference type="PhosphoSitePlus" id="Q9Y5X5"/>
<dbReference type="BioMuta" id="NPFFR2"/>
<dbReference type="DMDM" id="13878604"/>
<dbReference type="MassIVE" id="Q9Y5X5"/>
<dbReference type="PaxDb" id="9606-ENSP00000307822"/>
<dbReference type="PeptideAtlas" id="Q9Y5X5"/>
<dbReference type="Antibodypedia" id="3469">
    <property type="antibodies" value="222 antibodies from 28 providers"/>
</dbReference>
<dbReference type="DNASU" id="10886"/>
<dbReference type="Ensembl" id="ENST00000308744.12">
    <molecule id="Q9Y5X5-2"/>
    <property type="protein sequence ID" value="ENSP00000307822.7"/>
    <property type="gene ID" value="ENSG00000056291.19"/>
</dbReference>
<dbReference type="Ensembl" id="ENST00000358749.3">
    <molecule id="Q9Y5X5-2"/>
    <property type="protein sequence ID" value="ENSP00000351599.3"/>
    <property type="gene ID" value="ENSG00000056291.19"/>
</dbReference>
<dbReference type="Ensembl" id="ENST00000395999.5">
    <molecule id="Q9Y5X5-3"/>
    <property type="protein sequence ID" value="ENSP00000379321.1"/>
    <property type="gene ID" value="ENSG00000056291.19"/>
</dbReference>
<dbReference type="GeneID" id="10886"/>
<dbReference type="KEGG" id="hsa:10886"/>
<dbReference type="MANE-Select" id="ENST00000308744.12">
    <molecule id="Q9Y5X5-2"/>
    <property type="protein sequence ID" value="ENSP00000307822.7"/>
    <property type="RefSeq nucleotide sequence ID" value="NM_004885.3"/>
    <property type="RefSeq protein sequence ID" value="NP_004876.3"/>
</dbReference>
<dbReference type="UCSC" id="uc003hgg.3">
    <molecule id="Q9Y5X5-1"/>
    <property type="organism name" value="human"/>
</dbReference>
<dbReference type="AGR" id="HGNC:4525"/>
<dbReference type="CTD" id="10886"/>
<dbReference type="DisGeNET" id="10886"/>
<dbReference type="GeneCards" id="NPFFR2"/>
<dbReference type="HGNC" id="HGNC:4525">
    <property type="gene designation" value="NPFFR2"/>
</dbReference>
<dbReference type="HPA" id="ENSG00000056291">
    <property type="expression patterns" value="Tissue enhanced (lymphoid tissue, seminal vesicle)"/>
</dbReference>
<dbReference type="MIM" id="607449">
    <property type="type" value="gene"/>
</dbReference>
<dbReference type="neXtProt" id="NX_Q9Y5X5"/>
<dbReference type="OpenTargets" id="ENSG00000056291"/>
<dbReference type="PharmGKB" id="PA28918"/>
<dbReference type="VEuPathDB" id="HostDB:ENSG00000056291"/>
<dbReference type="eggNOG" id="KOG3656">
    <property type="taxonomic scope" value="Eukaryota"/>
</dbReference>
<dbReference type="GeneTree" id="ENSGT01130000278294"/>
<dbReference type="HOGENOM" id="CLU_1916367_0_0_1"/>
<dbReference type="InParanoid" id="Q9Y5X5"/>
<dbReference type="OMA" id="TRPVYWC"/>
<dbReference type="OrthoDB" id="5953793at2759"/>
<dbReference type="PAN-GO" id="Q9Y5X5">
    <property type="GO annotations" value="4 GO annotations based on evolutionary models"/>
</dbReference>
<dbReference type="PhylomeDB" id="Q9Y5X5"/>
<dbReference type="TreeFam" id="TF315303"/>
<dbReference type="PathwayCommons" id="Q9Y5X5"/>
<dbReference type="Reactome" id="R-HSA-389397">
    <property type="pathway name" value="Orexin and neuropeptides FF and QRFP bind to their respective receptors"/>
</dbReference>
<dbReference type="Reactome" id="R-HSA-416476">
    <property type="pathway name" value="G alpha (q) signalling events"/>
</dbReference>
<dbReference type="SignaLink" id="Q9Y5X5"/>
<dbReference type="SIGNOR" id="Q9Y5X5"/>
<dbReference type="BioGRID-ORCS" id="10886">
    <property type="hits" value="6 hits in 1141 CRISPR screens"/>
</dbReference>
<dbReference type="ChiTaRS" id="NPFFR2">
    <property type="organism name" value="human"/>
</dbReference>
<dbReference type="GenomeRNAi" id="10886"/>
<dbReference type="Pharos" id="Q9Y5X5">
    <property type="development level" value="Tchem"/>
</dbReference>
<dbReference type="PRO" id="PR:Q9Y5X5"/>
<dbReference type="Proteomes" id="UP000005640">
    <property type="component" value="Chromosome 4"/>
</dbReference>
<dbReference type="RNAct" id="Q9Y5X5">
    <property type="molecule type" value="protein"/>
</dbReference>
<dbReference type="Bgee" id="ENSG00000056291">
    <property type="expression patterns" value="Expressed in primordial germ cell in gonad and 84 other cell types or tissues"/>
</dbReference>
<dbReference type="ExpressionAtlas" id="Q9Y5X5">
    <property type="expression patterns" value="baseline and differential"/>
</dbReference>
<dbReference type="GO" id="GO:0015629">
    <property type="term" value="C:actin cytoskeleton"/>
    <property type="evidence" value="ECO:0000314"/>
    <property type="project" value="HPA"/>
</dbReference>
<dbReference type="GO" id="GO:0005886">
    <property type="term" value="C:plasma membrane"/>
    <property type="evidence" value="ECO:0000314"/>
    <property type="project" value="HPA"/>
</dbReference>
<dbReference type="GO" id="GO:0004930">
    <property type="term" value="F:G protein-coupled receptor activity"/>
    <property type="evidence" value="ECO:0000318"/>
    <property type="project" value="GO_Central"/>
</dbReference>
<dbReference type="GO" id="GO:0008188">
    <property type="term" value="F:neuropeptide receptor activity"/>
    <property type="evidence" value="ECO:0000314"/>
    <property type="project" value="UniProt"/>
</dbReference>
<dbReference type="GO" id="GO:0031628">
    <property type="term" value="F:opioid receptor binding"/>
    <property type="evidence" value="ECO:0007669"/>
    <property type="project" value="InterPro"/>
</dbReference>
<dbReference type="GO" id="GO:0032870">
    <property type="term" value="P:cellular response to hormone stimulus"/>
    <property type="evidence" value="ECO:0000318"/>
    <property type="project" value="GO_Central"/>
</dbReference>
<dbReference type="GO" id="GO:0009582">
    <property type="term" value="P:detection of abiotic stimulus"/>
    <property type="evidence" value="ECO:0000304"/>
    <property type="project" value="ProtInc"/>
</dbReference>
<dbReference type="GO" id="GO:0007186">
    <property type="term" value="P:G protein-coupled receptor signaling pathway"/>
    <property type="evidence" value="ECO:0000318"/>
    <property type="project" value="GO_Central"/>
</dbReference>
<dbReference type="GO" id="GO:0007218">
    <property type="term" value="P:neuropeptide signaling pathway"/>
    <property type="evidence" value="ECO:0000314"/>
    <property type="project" value="UniProt"/>
</dbReference>
<dbReference type="GO" id="GO:0043408">
    <property type="term" value="P:regulation of MAPK cascade"/>
    <property type="evidence" value="ECO:0007669"/>
    <property type="project" value="InterPro"/>
</dbReference>
<dbReference type="CDD" id="cd15980">
    <property type="entry name" value="7tmA_NPFFR2"/>
    <property type="match status" value="1"/>
</dbReference>
<dbReference type="FunFam" id="1.20.1070.10:FF:000137">
    <property type="entry name" value="neuropeptide FF receptor 2"/>
    <property type="match status" value="1"/>
</dbReference>
<dbReference type="Gene3D" id="1.20.1070.10">
    <property type="entry name" value="Rhodopsin 7-helix transmembrane proteins"/>
    <property type="match status" value="1"/>
</dbReference>
<dbReference type="InterPro" id="IPR000276">
    <property type="entry name" value="GPCR_Rhodpsn"/>
</dbReference>
<dbReference type="InterPro" id="IPR017452">
    <property type="entry name" value="GPCR_Rhodpsn_7TM"/>
</dbReference>
<dbReference type="InterPro" id="IPR005395">
    <property type="entry name" value="NPFF_rcpt"/>
</dbReference>
<dbReference type="InterPro" id="IPR005397">
    <property type="entry name" value="NPFF_rcpt_2"/>
</dbReference>
<dbReference type="PANTHER" id="PTHR24241:SF132">
    <property type="entry name" value="NEUROPEPTIDE FF RECEPTOR 2"/>
    <property type="match status" value="1"/>
</dbReference>
<dbReference type="PANTHER" id="PTHR24241">
    <property type="entry name" value="NEUROPEPTIDE RECEPTOR-RELATED G-PROTEIN COUPLED RECEPTOR"/>
    <property type="match status" value="1"/>
</dbReference>
<dbReference type="Pfam" id="PF00001">
    <property type="entry name" value="7tm_1"/>
    <property type="match status" value="1"/>
</dbReference>
<dbReference type="PRINTS" id="PR00237">
    <property type="entry name" value="GPCRRHODOPSN"/>
</dbReference>
<dbReference type="PRINTS" id="PR01570">
    <property type="entry name" value="NPFFRECEPTOR"/>
</dbReference>
<dbReference type="PRINTS" id="PR01572">
    <property type="entry name" value="NPFFRECEPTR2"/>
</dbReference>
<dbReference type="SMART" id="SM01381">
    <property type="entry name" value="7TM_GPCR_Srsx"/>
    <property type="match status" value="1"/>
</dbReference>
<dbReference type="SUPFAM" id="SSF81321">
    <property type="entry name" value="Family A G protein-coupled receptor-like"/>
    <property type="match status" value="1"/>
</dbReference>
<dbReference type="PROSITE" id="PS00237">
    <property type="entry name" value="G_PROTEIN_RECEP_F1_1"/>
    <property type="match status" value="1"/>
</dbReference>
<dbReference type="PROSITE" id="PS50262">
    <property type="entry name" value="G_PROTEIN_RECEP_F1_2"/>
    <property type="match status" value="1"/>
</dbReference>
<accession>Q9Y5X5</accession>
<accession>Q96RV1</accession>
<accession>Q9NR49</accession>
<name>NPFF2_HUMAN</name>
<sequence>MNSFFGTPAASWCLLESDVSSAPDKEAGRERRALSVQQRGGPAWSGSLEWSRQSAGDRRRLGLSRQTAKSSWSRSRDRTCCCRRAWWILVPAADRARRERFIMNEKWDTNSSENWHPIWNVNDTKHHLYSDINITYVNYYLHQPQVAAIFIISYFLIFFLCMMGNTVVCFIVMRNKHMHTVTNLFILNLAISDLLVGIFCMPITLLDNIIAGWPFGNTMCKISGLVQGISVAASVFTLVAIAVDRFQCVVYPFKPKLTIKTAFVIIMIIWVLAITIMSPSAVMLHVQEEKYYRVRLNSQNKTSPVYWCREDWPNQEMRKIYTTVLFANIYLAPLSLIVIMYGRIGISLFRAAVPHTGRKNQEQWHVVSRKKQKIIKMLLIVALLFILSWLPLWTLMMLSDYADLSPNELQIINIYIYPFAHWLAFGNSSVNPIIYGFFNENFRRGFQEAFQLQLCQKRAKPMEAYALKAKSHVLINTSNQLVQESTFQNPHGETLLYRKSAEKPQQELVMEELKETTNSSEI</sequence>
<proteinExistence type="evidence at protein level"/>
<evidence type="ECO:0000255" key="1"/>
<evidence type="ECO:0000255" key="2">
    <source>
        <dbReference type="PROSITE-ProRule" id="PRU00521"/>
    </source>
</evidence>
<evidence type="ECO:0000256" key="3">
    <source>
        <dbReference type="SAM" id="MobiDB-lite"/>
    </source>
</evidence>
<evidence type="ECO:0000269" key="4">
    <source>
    </source>
</evidence>
<evidence type="ECO:0000269" key="5">
    <source>
    </source>
</evidence>
<evidence type="ECO:0000303" key="6">
    <source>
    </source>
</evidence>
<evidence type="ECO:0000303" key="7">
    <source>
    </source>
</evidence>
<evidence type="ECO:0000303" key="8">
    <source>
    </source>
</evidence>
<evidence type="ECO:0000303" key="9">
    <source ref="5"/>
</evidence>
<evidence type="ECO:0000303" key="10">
    <source ref="6"/>
</evidence>
<evidence type="ECO:0000305" key="11"/>
<evidence type="ECO:0000312" key="12">
    <source>
        <dbReference type="HGNC" id="HGNC:4525"/>
    </source>
</evidence>
<feature type="chain" id="PRO_0000069915" description="Neuropeptide FF receptor 2">
    <location>
        <begin position="1"/>
        <end position="522"/>
    </location>
</feature>
<feature type="topological domain" description="Extracellular" evidence="1">
    <location>
        <begin position="1"/>
        <end position="147"/>
    </location>
</feature>
<feature type="transmembrane region" description="Helical; Name=1" evidence="1">
    <location>
        <begin position="148"/>
        <end position="168"/>
    </location>
</feature>
<feature type="topological domain" description="Cytoplasmic" evidence="1">
    <location>
        <begin position="169"/>
        <end position="184"/>
    </location>
</feature>
<feature type="transmembrane region" description="Helical; Name=2" evidence="1">
    <location>
        <begin position="185"/>
        <end position="205"/>
    </location>
</feature>
<feature type="topological domain" description="Extracellular" evidence="1">
    <location>
        <begin position="206"/>
        <end position="221"/>
    </location>
</feature>
<feature type="transmembrane region" description="Helical; Name=3" evidence="1">
    <location>
        <begin position="222"/>
        <end position="242"/>
    </location>
</feature>
<feature type="topological domain" description="Cytoplasmic" evidence="1">
    <location>
        <begin position="243"/>
        <end position="262"/>
    </location>
</feature>
<feature type="transmembrane region" description="Helical; Name=4" evidence="1">
    <location>
        <begin position="263"/>
        <end position="283"/>
    </location>
</feature>
<feature type="topological domain" description="Extracellular" evidence="1">
    <location>
        <begin position="284"/>
        <end position="319"/>
    </location>
</feature>
<feature type="transmembrane region" description="Helical; Name=5" evidence="1">
    <location>
        <begin position="320"/>
        <end position="340"/>
    </location>
</feature>
<feature type="topological domain" description="Cytoplasmic" evidence="1">
    <location>
        <begin position="341"/>
        <end position="377"/>
    </location>
</feature>
<feature type="transmembrane region" description="Helical; Name=6" evidence="1">
    <location>
        <begin position="378"/>
        <end position="398"/>
    </location>
</feature>
<feature type="topological domain" description="Extracellular" evidence="1">
    <location>
        <begin position="399"/>
        <end position="413"/>
    </location>
</feature>
<feature type="transmembrane region" description="Helical; Name=7" evidence="1">
    <location>
        <begin position="414"/>
        <end position="434"/>
    </location>
</feature>
<feature type="topological domain" description="Cytoplasmic" evidence="1">
    <location>
        <begin position="435"/>
        <end position="522"/>
    </location>
</feature>
<feature type="region of interest" description="Disordered" evidence="3">
    <location>
        <begin position="25"/>
        <end position="49"/>
    </location>
</feature>
<feature type="glycosylation site" description="N-linked (GlcNAc...) asparagine" evidence="1">
    <location>
        <position position="110"/>
    </location>
</feature>
<feature type="glycosylation site" description="N-linked (GlcNAc...) asparagine" evidence="1">
    <location>
        <position position="122"/>
    </location>
</feature>
<feature type="glycosylation site" description="N-linked (GlcNAc...) asparagine" evidence="1">
    <location>
        <position position="133"/>
    </location>
</feature>
<feature type="glycosylation site" description="N-linked (GlcNAc...) asparagine" evidence="1">
    <location>
        <position position="300"/>
    </location>
</feature>
<feature type="disulfide bond" evidence="2">
    <location>
        <begin position="220"/>
        <end position="308"/>
    </location>
</feature>
<feature type="splice variant" id="VSP_001907" description="In isoform 2." evidence="7 8 9">
    <location>
        <begin position="1"/>
        <end position="102"/>
    </location>
</feature>
<feature type="splice variant" id="VSP_001908" description="In isoform 3." evidence="6">
    <location>
        <begin position="1"/>
        <end position="99"/>
    </location>
</feature>
<feature type="splice variant" id="VSP_001909" description="In isoform 3." evidence="6">
    <original>R</original>
    <variation>M</variation>
    <location>
        <position position="100"/>
    </location>
</feature>
<feature type="splice variant" id="VSP_001910" description="In isoform 4." evidence="10">
    <original>FIMNEKWDTNSSENWHPIWNVNDTKHHLYSDI</original>
    <variation>MAIWKHDVQDQWIGPGNICRSFSLYVSCNCCR</variation>
    <location>
        <begin position="101"/>
        <end position="132"/>
    </location>
</feature>
<feature type="splice variant" id="VSP_001911" description="In isoform 4." evidence="10">
    <location>
        <begin position="133"/>
        <end position="522"/>
    </location>
</feature>
<feature type="sequence conflict" description="In Ref. 1 and 4." evidence="11" ref="1 4">
    <original>A</original>
    <variation>T</variation>
    <location>
        <position position="466"/>
    </location>
</feature>
<protein>
    <recommendedName>
        <fullName>Neuropeptide FF receptor 2</fullName>
    </recommendedName>
    <alternativeName>
        <fullName>G-protein coupled receptor 74</fullName>
    </alternativeName>
    <alternativeName>
        <fullName>G-protein coupled receptor HLWAR77</fullName>
    </alternativeName>
    <alternativeName>
        <fullName>Neuropeptide G-protein coupled receptor</fullName>
    </alternativeName>
</protein>